<dbReference type="EC" id="5.3.1.23" evidence="1"/>
<dbReference type="EMBL" id="CH954182">
    <property type="protein sequence ID" value="EDV52952.1"/>
    <property type="molecule type" value="Genomic_DNA"/>
</dbReference>
<dbReference type="SMR" id="B3P538"/>
<dbReference type="EnsemblMetazoa" id="FBtr0131920">
    <property type="protein sequence ID" value="FBpp0130412"/>
    <property type="gene ID" value="FBgn0104161"/>
</dbReference>
<dbReference type="EnsemblMetazoa" id="FBtr0412028">
    <property type="protein sequence ID" value="FBpp0370387"/>
    <property type="gene ID" value="FBgn0104161"/>
</dbReference>
<dbReference type="EnsemblMetazoa" id="XM_001981046.3">
    <property type="protein sequence ID" value="XP_001981082.1"/>
    <property type="gene ID" value="LOC6554720"/>
</dbReference>
<dbReference type="EnsemblMetazoa" id="XM_015153662.2">
    <property type="protein sequence ID" value="XP_015009148.1"/>
    <property type="gene ID" value="LOC6554720"/>
</dbReference>
<dbReference type="GeneID" id="6554720"/>
<dbReference type="KEGG" id="der:6554720"/>
<dbReference type="eggNOG" id="KOG1468">
    <property type="taxonomic scope" value="Eukaryota"/>
</dbReference>
<dbReference type="HOGENOM" id="CLU_016218_1_3_1"/>
<dbReference type="OMA" id="CETRPLN"/>
<dbReference type="OrthoDB" id="2461at2759"/>
<dbReference type="PhylomeDB" id="B3P538"/>
<dbReference type="UniPathway" id="UPA00904">
    <property type="reaction ID" value="UER00874"/>
</dbReference>
<dbReference type="Proteomes" id="UP000008711">
    <property type="component" value="Unassembled WGS sequence"/>
</dbReference>
<dbReference type="GO" id="GO:0005737">
    <property type="term" value="C:cytoplasm"/>
    <property type="evidence" value="ECO:0007669"/>
    <property type="project" value="UniProtKB-SubCell"/>
</dbReference>
<dbReference type="GO" id="GO:0005634">
    <property type="term" value="C:nucleus"/>
    <property type="evidence" value="ECO:0007669"/>
    <property type="project" value="UniProtKB-SubCell"/>
</dbReference>
<dbReference type="GO" id="GO:0046523">
    <property type="term" value="F:S-methyl-5-thioribose-1-phosphate isomerase activity"/>
    <property type="evidence" value="ECO:0007669"/>
    <property type="project" value="UniProtKB-UniRule"/>
</dbReference>
<dbReference type="GO" id="GO:0019509">
    <property type="term" value="P:L-methionine salvage from methylthioadenosine"/>
    <property type="evidence" value="ECO:0007669"/>
    <property type="project" value="UniProtKB-UniRule"/>
</dbReference>
<dbReference type="FunFam" id="1.20.120.420:FF:000010">
    <property type="entry name" value="Methylthioribose-1-phosphate isomerase"/>
    <property type="match status" value="1"/>
</dbReference>
<dbReference type="FunFam" id="3.40.50.10470:FF:000003">
    <property type="entry name" value="Methylthioribose-1-phosphate isomerase"/>
    <property type="match status" value="1"/>
</dbReference>
<dbReference type="Gene3D" id="1.20.120.420">
    <property type="entry name" value="translation initiation factor eif-2b, domain 1"/>
    <property type="match status" value="1"/>
</dbReference>
<dbReference type="Gene3D" id="3.40.50.10470">
    <property type="entry name" value="Translation initiation factor eif-2b, domain 2"/>
    <property type="match status" value="1"/>
</dbReference>
<dbReference type="HAMAP" id="MF_01678">
    <property type="entry name" value="Salvage_MtnA"/>
    <property type="match status" value="1"/>
</dbReference>
<dbReference type="InterPro" id="IPR000649">
    <property type="entry name" value="IF-2B-related"/>
</dbReference>
<dbReference type="InterPro" id="IPR005251">
    <property type="entry name" value="IF-M1Pi"/>
</dbReference>
<dbReference type="InterPro" id="IPR042529">
    <property type="entry name" value="IF_2B-like_C"/>
</dbReference>
<dbReference type="InterPro" id="IPR011559">
    <property type="entry name" value="Initiation_fac_2B_a/b/d"/>
</dbReference>
<dbReference type="InterPro" id="IPR027363">
    <property type="entry name" value="M1Pi_N"/>
</dbReference>
<dbReference type="InterPro" id="IPR037171">
    <property type="entry name" value="NagB/RpiA_transferase-like"/>
</dbReference>
<dbReference type="NCBIfam" id="TIGR00524">
    <property type="entry name" value="eIF-2B_rel"/>
    <property type="match status" value="1"/>
</dbReference>
<dbReference type="NCBIfam" id="NF004326">
    <property type="entry name" value="PRK05720.1"/>
    <property type="match status" value="1"/>
</dbReference>
<dbReference type="NCBIfam" id="TIGR00512">
    <property type="entry name" value="salvage_mtnA"/>
    <property type="match status" value="1"/>
</dbReference>
<dbReference type="PANTHER" id="PTHR43475">
    <property type="entry name" value="METHYLTHIORIBOSE-1-PHOSPHATE ISOMERASE"/>
    <property type="match status" value="1"/>
</dbReference>
<dbReference type="PANTHER" id="PTHR43475:SF1">
    <property type="entry name" value="METHYLTHIORIBOSE-1-PHOSPHATE ISOMERASE"/>
    <property type="match status" value="1"/>
</dbReference>
<dbReference type="Pfam" id="PF01008">
    <property type="entry name" value="IF-2B"/>
    <property type="match status" value="1"/>
</dbReference>
<dbReference type="SUPFAM" id="SSF100950">
    <property type="entry name" value="NagB/RpiA/CoA transferase-like"/>
    <property type="match status" value="1"/>
</dbReference>
<comment type="function">
    <text evidence="1">Catalyzes the interconversion of methylthioribose-1-phosphate (MTR-1-P) into methylthioribulose-1-phosphate (MTRu-1-P).</text>
</comment>
<comment type="catalytic activity">
    <reaction evidence="1">
        <text>5-(methylsulfanyl)-alpha-D-ribose 1-phosphate = 5-(methylsulfanyl)-D-ribulose 1-phosphate</text>
        <dbReference type="Rhea" id="RHEA:19989"/>
        <dbReference type="ChEBI" id="CHEBI:58533"/>
        <dbReference type="ChEBI" id="CHEBI:58548"/>
        <dbReference type="EC" id="5.3.1.23"/>
    </reaction>
</comment>
<comment type="pathway">
    <text evidence="1">Amino-acid biosynthesis; L-methionine biosynthesis via salvage pathway; L-methionine from S-methyl-5-thio-alpha-D-ribose 1-phosphate: step 1/6.</text>
</comment>
<comment type="subcellular location">
    <subcellularLocation>
        <location evidence="1">Cytoplasm</location>
    </subcellularLocation>
    <subcellularLocation>
        <location evidence="1">Nucleus</location>
    </subcellularLocation>
</comment>
<comment type="similarity">
    <text evidence="1">Belongs to the eIF-2B alpha/beta/delta subunits family. MtnA subfamily.</text>
</comment>
<evidence type="ECO:0000255" key="1">
    <source>
        <dbReference type="HAMAP-Rule" id="MF_03119"/>
    </source>
</evidence>
<name>MTNA_DROER</name>
<accession>B3P538</accession>
<feature type="chain" id="PRO_0000401976" description="Methylthioribose-1-phosphate isomerase">
    <location>
        <begin position="1"/>
        <end position="364"/>
    </location>
</feature>
<feature type="active site" description="Proton donor" evidence="1">
    <location>
        <position position="254"/>
    </location>
</feature>
<feature type="site" description="Transition state stabilizer" evidence="1">
    <location>
        <position position="174"/>
    </location>
</feature>
<organism>
    <name type="scientific">Drosophila erecta</name>
    <name type="common">Fruit fly</name>
    <dbReference type="NCBI Taxonomy" id="7220"/>
    <lineage>
        <taxon>Eukaryota</taxon>
        <taxon>Metazoa</taxon>
        <taxon>Ecdysozoa</taxon>
        <taxon>Arthropoda</taxon>
        <taxon>Hexapoda</taxon>
        <taxon>Insecta</taxon>
        <taxon>Pterygota</taxon>
        <taxon>Neoptera</taxon>
        <taxon>Endopterygota</taxon>
        <taxon>Diptera</taxon>
        <taxon>Brachycera</taxon>
        <taxon>Muscomorpha</taxon>
        <taxon>Ephydroidea</taxon>
        <taxon>Drosophilidae</taxon>
        <taxon>Drosophila</taxon>
        <taxon>Sophophora</taxon>
    </lineage>
</organism>
<gene>
    <name type="ORF">GG11866</name>
</gene>
<keyword id="KW-0028">Amino-acid biosynthesis</keyword>
<keyword id="KW-0963">Cytoplasm</keyword>
<keyword id="KW-0413">Isomerase</keyword>
<keyword id="KW-0486">Methionine biosynthesis</keyword>
<keyword id="KW-0539">Nucleus</keyword>
<sequence>MSLQSIKYSRGSLEILDQLLLPGQSKYEVVRGVEDGWKVINKMQVRGAPAIAIVGCLSLAVEINPEDFETKKSLRQEVEGKLNYLVSARPTAVNMKIAADELITLANDLYKDEAIDVNGMKQRFLDATEAMLKKDIADNRAIGANGAKAILQRVAEKGGAPAGSTGSVRVLTHCNTGSLATAGYGTALGVVRQLAELGKLEHVYCTETRPYNQGARLTAYELVHEKFPATLVLDSMVAALLRAKNVAAVVVGADRVASNGDTANKIGTYQIAVVAKHHDVPFYVAAPLTSIDLAIPGGDHIIIEERPDREMTHVGEHRIAAPGINCWNPAFDVTPASLITGIITERGVFKPAELKEAITKLLES</sequence>
<proteinExistence type="inferred from homology"/>
<reference key="1">
    <citation type="journal article" date="2007" name="Nature">
        <title>Evolution of genes and genomes on the Drosophila phylogeny.</title>
        <authorList>
            <consortium name="Drosophila 12 genomes consortium"/>
        </authorList>
    </citation>
    <scope>NUCLEOTIDE SEQUENCE [LARGE SCALE GENOMIC DNA]</scope>
    <source>
        <strain>Tucson 14021-0224.01</strain>
    </source>
</reference>
<protein>
    <recommendedName>
        <fullName evidence="1">Methylthioribose-1-phosphate isomerase</fullName>
        <shortName evidence="1">M1Pi</shortName>
        <shortName evidence="1">MTR-1-P isomerase</shortName>
        <ecNumber evidence="1">5.3.1.23</ecNumber>
    </recommendedName>
    <alternativeName>
        <fullName evidence="1">S-methyl-5-thioribose-1-phosphate isomerase</fullName>
    </alternativeName>
    <alternativeName>
        <fullName evidence="1">Translation initiation factor eIF-2B subunit alpha/beta/delta-like protein</fullName>
    </alternativeName>
</protein>